<reference key="1">
    <citation type="journal article" date="1997" name="Nature">
        <title>Molecular basis of symbiosis between Rhizobium and legumes.</title>
        <authorList>
            <person name="Freiberg C.A."/>
            <person name="Fellay R."/>
            <person name="Bairoch A."/>
            <person name="Broughton W.J."/>
            <person name="Rosenthal A."/>
            <person name="Perret X."/>
        </authorList>
    </citation>
    <scope>NUCLEOTIDE SEQUENCE [LARGE SCALE GENOMIC DNA]</scope>
    <source>
        <strain>NBRC 101917 / NGR234</strain>
    </source>
</reference>
<reference key="2">
    <citation type="journal article" date="2009" name="Appl. Environ. Microbiol.">
        <title>Rhizobium sp. strain NGR234 possesses a remarkable number of secretion systems.</title>
        <authorList>
            <person name="Schmeisser C."/>
            <person name="Liesegang H."/>
            <person name="Krysciak D."/>
            <person name="Bakkou N."/>
            <person name="Le Quere A."/>
            <person name="Wollherr A."/>
            <person name="Heinemeyer I."/>
            <person name="Morgenstern B."/>
            <person name="Pommerening-Roeser A."/>
            <person name="Flores M."/>
            <person name="Palacios R."/>
            <person name="Brenner S."/>
            <person name="Gottschalk G."/>
            <person name="Schmitz R.A."/>
            <person name="Broughton W.J."/>
            <person name="Perret X."/>
            <person name="Strittmatter A.W."/>
            <person name="Streit W.R."/>
        </authorList>
    </citation>
    <scope>NUCLEOTIDE SEQUENCE [LARGE SCALE GENOMIC DNA]</scope>
    <source>
        <strain>NBRC 101917 / NGR234</strain>
    </source>
</reference>
<geneLocation type="plasmid">
    <name>sym pNGR234a</name>
</geneLocation>
<dbReference type="EMBL" id="U00090">
    <property type="protein sequence ID" value="AAB91701.1"/>
    <property type="molecule type" value="Genomic_DNA"/>
</dbReference>
<dbReference type="RefSeq" id="NP_443899.1">
    <property type="nucleotide sequence ID" value="NC_000914.2"/>
</dbReference>
<dbReference type="SMR" id="P55489"/>
<dbReference type="KEGG" id="rhi:NGR_a03270"/>
<dbReference type="HOGENOM" id="CLU_911761_0_0_5"/>
<dbReference type="OrthoDB" id="8335788at2"/>
<dbReference type="Proteomes" id="UP000001054">
    <property type="component" value="Plasmid pNGR234a"/>
</dbReference>
<dbReference type="Gene3D" id="3.40.50.150">
    <property type="entry name" value="Vaccinia Virus protein VP39"/>
    <property type="match status" value="1"/>
</dbReference>
<dbReference type="InterPro" id="IPR019257">
    <property type="entry name" value="MeTrfase_dom"/>
</dbReference>
<dbReference type="InterPro" id="IPR029063">
    <property type="entry name" value="SAM-dependent_MTases_sf"/>
</dbReference>
<dbReference type="Pfam" id="PF10017">
    <property type="entry name" value="Methyltransf_33"/>
    <property type="match status" value="1"/>
</dbReference>
<dbReference type="SUPFAM" id="SSF53335">
    <property type="entry name" value="S-adenosyl-L-methionine-dependent methyltransferases"/>
    <property type="match status" value="1"/>
</dbReference>
<keyword id="KW-0614">Plasmid</keyword>
<keyword id="KW-1185">Reference proteome</keyword>
<proteinExistence type="predicted"/>
<name>Y4IF_SINFN</name>
<protein>
    <recommendedName>
        <fullName>Uncharacterized protein y4iF</fullName>
    </recommendedName>
</protein>
<accession>P55489</accession>
<sequence>MSGALLWAKAEAQRISSALVTGTTNMVDAELKLAQKLHGRVRDYVQWHHQDERCRKGISVLEYGPGTVRAFQQKTLPLVIGLRGETSRCTLVDRSREFLGDIAQLSSALGLKIEFIRGDIFSGRRYFCDDEAAFIVMFGRTFGNLAVPTNDTHPMEAVVETLKKISNSAKRCWVAISIGSDLRRDVAKSYYEAHPEFQLNVFYRMKAELPVDGNFDPEAFEYEPDVIGGDQFMQVIHTAVVKKNLDFCIGGKDIILLSGERLHLKNSFCFSESFFKKCAHRAGFVPIDVLSDDAGSAIHVLQKVN</sequence>
<feature type="chain" id="PRO_0000200859" description="Uncharacterized protein y4iF">
    <location>
        <begin position="1"/>
        <end position="305"/>
    </location>
</feature>
<gene>
    <name type="ordered locus">NGR_a03270</name>
    <name type="ORF">y4iF</name>
</gene>
<organism>
    <name type="scientific">Sinorhizobium fredii (strain NBRC 101917 / NGR234)</name>
    <dbReference type="NCBI Taxonomy" id="394"/>
    <lineage>
        <taxon>Bacteria</taxon>
        <taxon>Pseudomonadati</taxon>
        <taxon>Pseudomonadota</taxon>
        <taxon>Alphaproteobacteria</taxon>
        <taxon>Hyphomicrobiales</taxon>
        <taxon>Rhizobiaceae</taxon>
        <taxon>Sinorhizobium/Ensifer group</taxon>
        <taxon>Sinorhizobium</taxon>
    </lineage>
</organism>